<reference key="1">
    <citation type="journal article" date="2006" name="Genome Res.">
        <title>Skewed genomic variability in strains of the toxigenic bacterial pathogen, Clostridium perfringens.</title>
        <authorList>
            <person name="Myers G.S.A."/>
            <person name="Rasko D.A."/>
            <person name="Cheung J.K."/>
            <person name="Ravel J."/>
            <person name="Seshadri R."/>
            <person name="DeBoy R.T."/>
            <person name="Ren Q."/>
            <person name="Varga J."/>
            <person name="Awad M.M."/>
            <person name="Brinkac L.M."/>
            <person name="Daugherty S.C."/>
            <person name="Haft D.H."/>
            <person name="Dodson R.J."/>
            <person name="Madupu R."/>
            <person name="Nelson W.C."/>
            <person name="Rosovitz M.J."/>
            <person name="Sullivan S.A."/>
            <person name="Khouri H."/>
            <person name="Dimitrov G.I."/>
            <person name="Watkins K.L."/>
            <person name="Mulligan S."/>
            <person name="Benton J."/>
            <person name="Radune D."/>
            <person name="Fisher D.J."/>
            <person name="Atkins H.S."/>
            <person name="Hiscox T."/>
            <person name="Jost B.H."/>
            <person name="Billington S.J."/>
            <person name="Songer J.G."/>
            <person name="McClane B.A."/>
            <person name="Titball R.W."/>
            <person name="Rood J.I."/>
            <person name="Melville S.B."/>
            <person name="Paulsen I.T."/>
        </authorList>
    </citation>
    <scope>NUCLEOTIDE SEQUENCE [LARGE SCALE GENOMIC DNA]</scope>
    <source>
        <strain>ATCC 13124 / DSM 756 / JCM 1290 / NCIMB 6125 / NCTC 8237 / S 107 / Type A</strain>
    </source>
</reference>
<proteinExistence type="inferred from homology"/>
<feature type="chain" id="PRO_1000050179" description="4-hydroxy-tetrahydrodipicolinate synthase">
    <location>
        <begin position="1"/>
        <end position="291"/>
    </location>
</feature>
<feature type="active site" description="Proton donor/acceptor" evidence="1">
    <location>
        <position position="132"/>
    </location>
</feature>
<feature type="active site" description="Schiff-base intermediate with substrate" evidence="1">
    <location>
        <position position="160"/>
    </location>
</feature>
<feature type="binding site" evidence="1">
    <location>
        <position position="44"/>
    </location>
    <ligand>
        <name>pyruvate</name>
        <dbReference type="ChEBI" id="CHEBI:15361"/>
    </ligand>
</feature>
<feature type="binding site" evidence="1">
    <location>
        <position position="202"/>
    </location>
    <ligand>
        <name>pyruvate</name>
        <dbReference type="ChEBI" id="CHEBI:15361"/>
    </ligand>
</feature>
<feature type="site" description="Part of a proton relay during catalysis" evidence="1">
    <location>
        <position position="43"/>
    </location>
</feature>
<feature type="site" description="Part of a proton relay during catalysis" evidence="1">
    <location>
        <position position="106"/>
    </location>
</feature>
<dbReference type="EC" id="4.3.3.7" evidence="1"/>
<dbReference type="EMBL" id="CP000246">
    <property type="protein sequence ID" value="ABG82514.1"/>
    <property type="molecule type" value="Genomic_DNA"/>
</dbReference>
<dbReference type="SMR" id="Q0TP55"/>
<dbReference type="STRING" id="195103.CPF_2161"/>
<dbReference type="PaxDb" id="195103-CPF_2161"/>
<dbReference type="KEGG" id="cpf:CPF_2161"/>
<dbReference type="eggNOG" id="COG0329">
    <property type="taxonomic scope" value="Bacteria"/>
</dbReference>
<dbReference type="HOGENOM" id="CLU_049343_7_1_9"/>
<dbReference type="UniPathway" id="UPA00034">
    <property type="reaction ID" value="UER00017"/>
</dbReference>
<dbReference type="Proteomes" id="UP000001823">
    <property type="component" value="Chromosome"/>
</dbReference>
<dbReference type="GO" id="GO:0005829">
    <property type="term" value="C:cytosol"/>
    <property type="evidence" value="ECO:0007669"/>
    <property type="project" value="TreeGrafter"/>
</dbReference>
<dbReference type="GO" id="GO:0008840">
    <property type="term" value="F:4-hydroxy-tetrahydrodipicolinate synthase activity"/>
    <property type="evidence" value="ECO:0007669"/>
    <property type="project" value="UniProtKB-UniRule"/>
</dbReference>
<dbReference type="GO" id="GO:0019877">
    <property type="term" value="P:diaminopimelate biosynthetic process"/>
    <property type="evidence" value="ECO:0007669"/>
    <property type="project" value="UniProtKB-UniRule"/>
</dbReference>
<dbReference type="GO" id="GO:0009089">
    <property type="term" value="P:lysine biosynthetic process via diaminopimelate"/>
    <property type="evidence" value="ECO:0007669"/>
    <property type="project" value="UniProtKB-UniRule"/>
</dbReference>
<dbReference type="CDD" id="cd00950">
    <property type="entry name" value="DHDPS"/>
    <property type="match status" value="1"/>
</dbReference>
<dbReference type="Gene3D" id="3.20.20.70">
    <property type="entry name" value="Aldolase class I"/>
    <property type="match status" value="1"/>
</dbReference>
<dbReference type="HAMAP" id="MF_00418">
    <property type="entry name" value="DapA"/>
    <property type="match status" value="1"/>
</dbReference>
<dbReference type="InterPro" id="IPR013785">
    <property type="entry name" value="Aldolase_TIM"/>
</dbReference>
<dbReference type="InterPro" id="IPR005263">
    <property type="entry name" value="DapA"/>
</dbReference>
<dbReference type="InterPro" id="IPR002220">
    <property type="entry name" value="DapA-like"/>
</dbReference>
<dbReference type="InterPro" id="IPR020625">
    <property type="entry name" value="Schiff_base-form_aldolases_AS"/>
</dbReference>
<dbReference type="InterPro" id="IPR020624">
    <property type="entry name" value="Schiff_base-form_aldolases_CS"/>
</dbReference>
<dbReference type="NCBIfam" id="TIGR00674">
    <property type="entry name" value="dapA"/>
    <property type="match status" value="1"/>
</dbReference>
<dbReference type="PANTHER" id="PTHR12128:SF66">
    <property type="entry name" value="4-HYDROXY-2-OXOGLUTARATE ALDOLASE, MITOCHONDRIAL"/>
    <property type="match status" value="1"/>
</dbReference>
<dbReference type="PANTHER" id="PTHR12128">
    <property type="entry name" value="DIHYDRODIPICOLINATE SYNTHASE"/>
    <property type="match status" value="1"/>
</dbReference>
<dbReference type="Pfam" id="PF00701">
    <property type="entry name" value="DHDPS"/>
    <property type="match status" value="1"/>
</dbReference>
<dbReference type="PIRSF" id="PIRSF001365">
    <property type="entry name" value="DHDPS"/>
    <property type="match status" value="1"/>
</dbReference>
<dbReference type="PRINTS" id="PR00146">
    <property type="entry name" value="DHPICSNTHASE"/>
</dbReference>
<dbReference type="SMART" id="SM01130">
    <property type="entry name" value="DHDPS"/>
    <property type="match status" value="1"/>
</dbReference>
<dbReference type="SUPFAM" id="SSF51569">
    <property type="entry name" value="Aldolase"/>
    <property type="match status" value="1"/>
</dbReference>
<dbReference type="PROSITE" id="PS00665">
    <property type="entry name" value="DHDPS_1"/>
    <property type="match status" value="1"/>
</dbReference>
<dbReference type="PROSITE" id="PS00666">
    <property type="entry name" value="DHDPS_2"/>
    <property type="match status" value="1"/>
</dbReference>
<accession>Q0TP55</accession>
<protein>
    <recommendedName>
        <fullName evidence="1">4-hydroxy-tetrahydrodipicolinate synthase</fullName>
        <shortName evidence="1">HTPA synthase</shortName>
        <ecNumber evidence="1">4.3.3.7</ecNumber>
    </recommendedName>
</protein>
<gene>
    <name evidence="1" type="primary">dapA</name>
    <name type="ordered locus">CPF_2161</name>
</gene>
<keyword id="KW-0028">Amino-acid biosynthesis</keyword>
<keyword id="KW-0963">Cytoplasm</keyword>
<keyword id="KW-0220">Diaminopimelate biosynthesis</keyword>
<keyword id="KW-0456">Lyase</keyword>
<keyword id="KW-0457">Lysine biosynthesis</keyword>
<keyword id="KW-0704">Schiff base</keyword>
<sequence>MFKGSCVALITPFTEDGVNYEELRKLLEWHIKNHTDAILVCGTTGEGSTMTLEEKKEVIKFSVEVVNKRVPVIAGTGTNNTKASIELSKYAEEVGADMVLIITPYYNKTSQKGLYAHFNAINDAINIPIMLYNVPSRTGMNITPLMLDKLADLNNVVAIKEASGDLSQVAKMAELCGDRIAIYSGNDDQIVPILSLGGAGVVSVLANILPEETHNICEKYFLGEVIESRNLQLKYLSLANSLFIETNPIPVKTAMNLMNFNCGPLRLPLCEMEDSNLVILEENLKANGLIK</sequence>
<name>DAPA_CLOP1</name>
<organism>
    <name type="scientific">Clostridium perfringens (strain ATCC 13124 / DSM 756 / JCM 1290 / NCIMB 6125 / NCTC 8237 / Type A)</name>
    <dbReference type="NCBI Taxonomy" id="195103"/>
    <lineage>
        <taxon>Bacteria</taxon>
        <taxon>Bacillati</taxon>
        <taxon>Bacillota</taxon>
        <taxon>Clostridia</taxon>
        <taxon>Eubacteriales</taxon>
        <taxon>Clostridiaceae</taxon>
        <taxon>Clostridium</taxon>
    </lineage>
</organism>
<comment type="function">
    <text evidence="1">Catalyzes the condensation of (S)-aspartate-beta-semialdehyde [(S)-ASA] and pyruvate to 4-hydroxy-tetrahydrodipicolinate (HTPA).</text>
</comment>
<comment type="catalytic activity">
    <reaction evidence="1">
        <text>L-aspartate 4-semialdehyde + pyruvate = (2S,4S)-4-hydroxy-2,3,4,5-tetrahydrodipicolinate + H2O + H(+)</text>
        <dbReference type="Rhea" id="RHEA:34171"/>
        <dbReference type="ChEBI" id="CHEBI:15361"/>
        <dbReference type="ChEBI" id="CHEBI:15377"/>
        <dbReference type="ChEBI" id="CHEBI:15378"/>
        <dbReference type="ChEBI" id="CHEBI:67139"/>
        <dbReference type="ChEBI" id="CHEBI:537519"/>
        <dbReference type="EC" id="4.3.3.7"/>
    </reaction>
</comment>
<comment type="pathway">
    <text evidence="1">Amino-acid biosynthesis; L-lysine biosynthesis via DAP pathway; (S)-tetrahydrodipicolinate from L-aspartate: step 3/4.</text>
</comment>
<comment type="subunit">
    <text evidence="1">Homotetramer; dimer of dimers.</text>
</comment>
<comment type="subcellular location">
    <subcellularLocation>
        <location evidence="1">Cytoplasm</location>
    </subcellularLocation>
</comment>
<comment type="similarity">
    <text evidence="1">Belongs to the DapA family.</text>
</comment>
<comment type="caution">
    <text evidence="2">Was originally thought to be a dihydrodipicolinate synthase (DHDPS), catalyzing the condensation of (S)-aspartate-beta-semialdehyde [(S)-ASA] and pyruvate to dihydrodipicolinate (DHDP). However, it was shown in E.coli that the product of the enzymatic reaction is not dihydrodipicolinate but in fact (4S)-4-hydroxy-2,3,4,5-tetrahydro-(2S)-dipicolinic acid (HTPA), and that the consecutive dehydration reaction leading to DHDP is not spontaneous but catalyzed by DapB.</text>
</comment>
<evidence type="ECO:0000255" key="1">
    <source>
        <dbReference type="HAMAP-Rule" id="MF_00418"/>
    </source>
</evidence>
<evidence type="ECO:0000305" key="2"/>